<reference key="1">
    <citation type="journal article" date="2006" name="PLoS Genet.">
        <title>The complete genome sequence and comparative genome analysis of the high pathogenicity Yersinia enterocolitica strain 8081.</title>
        <authorList>
            <person name="Thomson N.R."/>
            <person name="Howard S."/>
            <person name="Wren B.W."/>
            <person name="Holden M.T.G."/>
            <person name="Crossman L."/>
            <person name="Challis G.L."/>
            <person name="Churcher C."/>
            <person name="Mungall K."/>
            <person name="Brooks K."/>
            <person name="Chillingworth T."/>
            <person name="Feltwell T."/>
            <person name="Abdellah Z."/>
            <person name="Hauser H."/>
            <person name="Jagels K."/>
            <person name="Maddison M."/>
            <person name="Moule S."/>
            <person name="Sanders M."/>
            <person name="Whitehead S."/>
            <person name="Quail M.A."/>
            <person name="Dougan G."/>
            <person name="Parkhill J."/>
            <person name="Prentice M.B."/>
        </authorList>
    </citation>
    <scope>NUCLEOTIDE SEQUENCE [LARGE SCALE GENOMIC DNA]</scope>
    <source>
        <strain>NCTC 13174 / 8081</strain>
    </source>
</reference>
<organism>
    <name type="scientific">Yersinia enterocolitica serotype O:8 / biotype 1B (strain NCTC 13174 / 8081)</name>
    <dbReference type="NCBI Taxonomy" id="393305"/>
    <lineage>
        <taxon>Bacteria</taxon>
        <taxon>Pseudomonadati</taxon>
        <taxon>Pseudomonadota</taxon>
        <taxon>Gammaproteobacteria</taxon>
        <taxon>Enterobacterales</taxon>
        <taxon>Yersiniaceae</taxon>
        <taxon>Yersinia</taxon>
    </lineage>
</organism>
<feature type="chain" id="PRO_1000005187" description="Small ribosomal subunit protein bS21">
    <location>
        <begin position="1"/>
        <end position="71"/>
    </location>
</feature>
<feature type="region of interest" description="Disordered" evidence="2">
    <location>
        <begin position="43"/>
        <end position="71"/>
    </location>
</feature>
<feature type="compositionally biased region" description="Basic residues" evidence="2">
    <location>
        <begin position="46"/>
        <end position="59"/>
    </location>
</feature>
<feature type="compositionally biased region" description="Basic and acidic residues" evidence="2">
    <location>
        <begin position="60"/>
        <end position="71"/>
    </location>
</feature>
<accession>A1JQX1</accession>
<protein>
    <recommendedName>
        <fullName evidence="1">Small ribosomal subunit protein bS21</fullName>
    </recommendedName>
    <alternativeName>
        <fullName evidence="3">30S ribosomal protein S21</fullName>
    </alternativeName>
</protein>
<gene>
    <name evidence="1" type="primary">rpsU</name>
    <name type="ordered locus">YE3682</name>
</gene>
<name>RS21_YERE8</name>
<dbReference type="EMBL" id="AM286415">
    <property type="protein sequence ID" value="CAL13709.1"/>
    <property type="molecule type" value="Genomic_DNA"/>
</dbReference>
<dbReference type="RefSeq" id="WP_001144069.1">
    <property type="nucleotide sequence ID" value="NC_008800.1"/>
</dbReference>
<dbReference type="RefSeq" id="YP_001007837.1">
    <property type="nucleotide sequence ID" value="NC_008800.1"/>
</dbReference>
<dbReference type="SMR" id="A1JQX1"/>
<dbReference type="GeneID" id="98390195"/>
<dbReference type="KEGG" id="yen:YE3682"/>
<dbReference type="PATRIC" id="fig|393305.7.peg.3921"/>
<dbReference type="eggNOG" id="COG0828">
    <property type="taxonomic scope" value="Bacteria"/>
</dbReference>
<dbReference type="HOGENOM" id="CLU_159258_1_0_6"/>
<dbReference type="OrthoDB" id="9799244at2"/>
<dbReference type="PRO" id="PR:A1JQX1"/>
<dbReference type="Proteomes" id="UP000000642">
    <property type="component" value="Chromosome"/>
</dbReference>
<dbReference type="GO" id="GO:1990904">
    <property type="term" value="C:ribonucleoprotein complex"/>
    <property type="evidence" value="ECO:0007669"/>
    <property type="project" value="UniProtKB-KW"/>
</dbReference>
<dbReference type="GO" id="GO:0005840">
    <property type="term" value="C:ribosome"/>
    <property type="evidence" value="ECO:0007669"/>
    <property type="project" value="UniProtKB-KW"/>
</dbReference>
<dbReference type="GO" id="GO:0003735">
    <property type="term" value="F:structural constituent of ribosome"/>
    <property type="evidence" value="ECO:0007669"/>
    <property type="project" value="InterPro"/>
</dbReference>
<dbReference type="GO" id="GO:0006412">
    <property type="term" value="P:translation"/>
    <property type="evidence" value="ECO:0007669"/>
    <property type="project" value="UniProtKB-UniRule"/>
</dbReference>
<dbReference type="FunFam" id="1.20.5.1150:FF:000001">
    <property type="entry name" value="30S ribosomal protein S21"/>
    <property type="match status" value="1"/>
</dbReference>
<dbReference type="Gene3D" id="1.20.5.1150">
    <property type="entry name" value="Ribosomal protein S8"/>
    <property type="match status" value="1"/>
</dbReference>
<dbReference type="HAMAP" id="MF_00358">
    <property type="entry name" value="Ribosomal_bS21"/>
    <property type="match status" value="1"/>
</dbReference>
<dbReference type="InterPro" id="IPR001911">
    <property type="entry name" value="Ribosomal_bS21"/>
</dbReference>
<dbReference type="InterPro" id="IPR018278">
    <property type="entry name" value="Ribosomal_bS21_CS"/>
</dbReference>
<dbReference type="InterPro" id="IPR038380">
    <property type="entry name" value="Ribosomal_bS21_sf"/>
</dbReference>
<dbReference type="NCBIfam" id="TIGR00030">
    <property type="entry name" value="S21p"/>
    <property type="match status" value="1"/>
</dbReference>
<dbReference type="PANTHER" id="PTHR21109">
    <property type="entry name" value="MITOCHONDRIAL 28S RIBOSOMAL PROTEIN S21"/>
    <property type="match status" value="1"/>
</dbReference>
<dbReference type="PANTHER" id="PTHR21109:SF22">
    <property type="entry name" value="SMALL RIBOSOMAL SUBUNIT PROTEIN BS21"/>
    <property type="match status" value="1"/>
</dbReference>
<dbReference type="Pfam" id="PF01165">
    <property type="entry name" value="Ribosomal_S21"/>
    <property type="match status" value="1"/>
</dbReference>
<dbReference type="PRINTS" id="PR00976">
    <property type="entry name" value="RIBOSOMALS21"/>
</dbReference>
<dbReference type="PROSITE" id="PS01181">
    <property type="entry name" value="RIBOSOMAL_S21"/>
    <property type="match status" value="1"/>
</dbReference>
<comment type="similarity">
    <text evidence="1">Belongs to the bacterial ribosomal protein bS21 family.</text>
</comment>
<evidence type="ECO:0000255" key="1">
    <source>
        <dbReference type="HAMAP-Rule" id="MF_00358"/>
    </source>
</evidence>
<evidence type="ECO:0000256" key="2">
    <source>
        <dbReference type="SAM" id="MobiDB-lite"/>
    </source>
</evidence>
<evidence type="ECO:0000305" key="3"/>
<sequence>MPVIKVRENEPFDVALRRFKRSCEKAGVLAEVRRREFYEKPTTERKRAKASAVKRHAKKLARENARRTRLY</sequence>
<proteinExistence type="inferred from homology"/>
<keyword id="KW-0687">Ribonucleoprotein</keyword>
<keyword id="KW-0689">Ribosomal protein</keyword>